<protein>
    <recommendedName>
        <fullName evidence="1">Putative membrane protein insertion efficiency factor</fullName>
    </recommendedName>
</protein>
<dbReference type="EMBL" id="CP000517">
    <property type="protein sequence ID" value="ABX26943.1"/>
    <property type="molecule type" value="Genomic_DNA"/>
</dbReference>
<dbReference type="KEGG" id="lhe:lhv_2403"/>
<dbReference type="eggNOG" id="COG0759">
    <property type="taxonomic scope" value="Bacteria"/>
</dbReference>
<dbReference type="HOGENOM" id="CLU_144811_2_2_9"/>
<dbReference type="Proteomes" id="UP000000790">
    <property type="component" value="Chromosome"/>
</dbReference>
<dbReference type="GO" id="GO:0005886">
    <property type="term" value="C:plasma membrane"/>
    <property type="evidence" value="ECO:0007669"/>
    <property type="project" value="UniProtKB-SubCell"/>
</dbReference>
<dbReference type="HAMAP" id="MF_00386">
    <property type="entry name" value="UPF0161_YidD"/>
    <property type="match status" value="1"/>
</dbReference>
<dbReference type="InterPro" id="IPR002696">
    <property type="entry name" value="Membr_insert_effic_factor_YidD"/>
</dbReference>
<dbReference type="NCBIfam" id="TIGR00278">
    <property type="entry name" value="membrane protein insertion efficiency factor YidD"/>
    <property type="match status" value="1"/>
</dbReference>
<dbReference type="PANTHER" id="PTHR33383">
    <property type="entry name" value="MEMBRANE PROTEIN INSERTION EFFICIENCY FACTOR-RELATED"/>
    <property type="match status" value="1"/>
</dbReference>
<dbReference type="PANTHER" id="PTHR33383:SF1">
    <property type="entry name" value="MEMBRANE PROTEIN INSERTION EFFICIENCY FACTOR-RELATED"/>
    <property type="match status" value="1"/>
</dbReference>
<dbReference type="Pfam" id="PF01809">
    <property type="entry name" value="YidD"/>
    <property type="match status" value="1"/>
</dbReference>
<dbReference type="SMART" id="SM01234">
    <property type="entry name" value="Haemolytic"/>
    <property type="match status" value="1"/>
</dbReference>
<sequence length="97" mass="11213">MRKILIFIVRIYQTLISPLFPPSCRYYPTCSNYMIDALKKHGPILGLIMGISRTLRCNPFVRGGVDPVPDNFTVFRNPHPERYEDEIIASKFHSNSK</sequence>
<reference key="1">
    <citation type="journal article" date="2008" name="J. Bacteriol.">
        <title>Genome sequence of Lactobacillus helveticus: an organism distinguished by selective gene loss and IS element expansion.</title>
        <authorList>
            <person name="Callanan M."/>
            <person name="Kaleta P."/>
            <person name="O'Callaghan J."/>
            <person name="O'Sullivan O."/>
            <person name="Jordan K."/>
            <person name="McAuliffe O."/>
            <person name="Sangrador-Vegas A."/>
            <person name="Slattery L."/>
            <person name="Fitzgerald G.F."/>
            <person name="Beresford T."/>
            <person name="Ross R.P."/>
        </authorList>
    </citation>
    <scope>NUCLEOTIDE SEQUENCE [LARGE SCALE GENOMIC DNA]</scope>
    <source>
        <strain>DPC 4571</strain>
    </source>
</reference>
<comment type="function">
    <text evidence="1">Could be involved in insertion of integral membrane proteins into the membrane.</text>
</comment>
<comment type="subcellular location">
    <subcellularLocation>
        <location evidence="1">Cell membrane</location>
        <topology evidence="1">Peripheral membrane protein</topology>
        <orientation evidence="1">Cytoplasmic side</orientation>
    </subcellularLocation>
</comment>
<comment type="similarity">
    <text evidence="1">Belongs to the UPF0161 family.</text>
</comment>
<gene>
    <name type="ordered locus">lhv_2403</name>
</gene>
<name>YIDD_LACH4</name>
<organism>
    <name type="scientific">Lactobacillus helveticus (strain DPC 4571)</name>
    <dbReference type="NCBI Taxonomy" id="405566"/>
    <lineage>
        <taxon>Bacteria</taxon>
        <taxon>Bacillati</taxon>
        <taxon>Bacillota</taxon>
        <taxon>Bacilli</taxon>
        <taxon>Lactobacillales</taxon>
        <taxon>Lactobacillaceae</taxon>
        <taxon>Lactobacillus</taxon>
    </lineage>
</organism>
<keyword id="KW-1003">Cell membrane</keyword>
<keyword id="KW-0472">Membrane</keyword>
<feature type="chain" id="PRO_1000072203" description="Putative membrane protein insertion efficiency factor">
    <location>
        <begin position="1"/>
        <end position="97"/>
    </location>
</feature>
<accession>A8YUK5</accession>
<evidence type="ECO:0000255" key="1">
    <source>
        <dbReference type="HAMAP-Rule" id="MF_00386"/>
    </source>
</evidence>
<proteinExistence type="inferred from homology"/>